<keyword id="KW-1015">Disulfide bond</keyword>
<keyword id="KW-0325">Glycoprotein</keyword>
<keyword id="KW-0393">Immunoglobulin domain</keyword>
<keyword id="KW-0472">Membrane</keyword>
<keyword id="KW-1185">Reference proteome</keyword>
<keyword id="KW-0677">Repeat</keyword>
<keyword id="KW-0732">Signal</keyword>
<keyword id="KW-0812">Transmembrane</keyword>
<keyword id="KW-1133">Transmembrane helix</keyword>
<sequence>MGLSWALLPFLLLAFRAELLALQPALGSQPPSASSSHSMGSSRDFVSNVSSSQHPQPPGSEASAGIPDSNRFPQGLNSSHVPGLFRTNVSAEEQYLSPDVTSSETPPSRVSLDGLDSQDPDKDSGLPFLVKTPASQISVQTPDTKVPTKASGSKLSLEHHNLEPGSKISSEIYQAASFPQQVGGPLAVLVGTTIRLPLTPVPSSSPPAPLVVWRRGSKVLAAGGLGSQAPLISLDPMHQARLRFDQIRGGLELTSARLDDAGVYTVEVIRGGVSQQIREFVVGVFEPLPQLSVQPRAPETEEGAAELRLSCVGWNPGSGKLSWSRDGRALGTSDPEGAEPPRIRTERDQLLISRPVRSDHARYTCQVRSPFGHTEAAADVSVFYGPDAPVIRVSSDRDASPALYVTAGSNVTLHCSAPSRPPADIAWSLADPTEAAVPAGPRLLLPAVGPGHGGAYACIAANPRTGHRRRSVFNLTVADLPPGAPQCSVEGGPVDRSLRFRCSWPGGVPAASLQFQGLPEGVRAGPVPSTLLVTVPARPELSGVAVTCLARHLVATRTCTIIPEAPQEVLLQPIVEETQPGDVVVALEVTGCPPPSRASWARQGRPLAPGGGGRLQLSQDGRKLLINNFSLDWDLGNYSVLCSSALGAGGNQITLTGPSISSWRLQRAQEAAVLTWDVERGTLLTGFHIQAWTDSSEVDRVTMSRDWVSLLILGPQERSAIVPLPPRNPGTWAFRILPILGSLPGTPSQSRVYQAGSDLSPGAIAGIVLGSLLGLALLAGLLILCICCLRRYPGRASVKKQHSLTLAPVLTPPAKKIQSLTPVQTPRPLPIKTKMQSPHPAKAQQVISPSPTLCPGGSPWTVRAATQV</sequence>
<name>VS10L_MOUSE</name>
<gene>
    <name type="primary">Vsig10l</name>
</gene>
<comment type="subcellular location">
    <subcellularLocation>
        <location evidence="4">Membrane</location>
        <topology evidence="4">Single-pass type I membrane protein</topology>
    </subcellularLocation>
</comment>
<organism>
    <name type="scientific">Mus musculus</name>
    <name type="common">Mouse</name>
    <dbReference type="NCBI Taxonomy" id="10090"/>
    <lineage>
        <taxon>Eukaryota</taxon>
        <taxon>Metazoa</taxon>
        <taxon>Chordata</taxon>
        <taxon>Craniata</taxon>
        <taxon>Vertebrata</taxon>
        <taxon>Euteleostomi</taxon>
        <taxon>Mammalia</taxon>
        <taxon>Eutheria</taxon>
        <taxon>Euarchontoglires</taxon>
        <taxon>Glires</taxon>
        <taxon>Rodentia</taxon>
        <taxon>Myomorpha</taxon>
        <taxon>Muroidea</taxon>
        <taxon>Muridae</taxon>
        <taxon>Murinae</taxon>
        <taxon>Mus</taxon>
        <taxon>Mus</taxon>
    </lineage>
</organism>
<evidence type="ECO:0000255" key="1"/>
<evidence type="ECO:0000255" key="2">
    <source>
        <dbReference type="PROSITE-ProRule" id="PRU00114"/>
    </source>
</evidence>
<evidence type="ECO:0000256" key="3">
    <source>
        <dbReference type="SAM" id="MobiDB-lite"/>
    </source>
</evidence>
<evidence type="ECO:0000305" key="4"/>
<dbReference type="EMBL" id="AC154108">
    <property type="status" value="NOT_ANNOTATED_CDS"/>
    <property type="molecule type" value="Genomic_DNA"/>
</dbReference>
<dbReference type="CCDS" id="CCDS90217.1"/>
<dbReference type="RefSeq" id="NP_001355810.1">
    <property type="nucleotide sequence ID" value="NM_001368881.1"/>
</dbReference>
<dbReference type="RefSeq" id="XP_355890.5">
    <property type="nucleotide sequence ID" value="XM_355890.10"/>
</dbReference>
<dbReference type="FunCoup" id="D3YZF7">
    <property type="interactions" value="586"/>
</dbReference>
<dbReference type="STRING" id="10090.ENSMUSP00000144692"/>
<dbReference type="GlyCosmos" id="D3YZF7">
    <property type="glycosylation" value="7 sites, No reported glycans"/>
</dbReference>
<dbReference type="GlyGen" id="D3YZF7">
    <property type="glycosylation" value="9 sites"/>
</dbReference>
<dbReference type="PhosphoSitePlus" id="D3YZF7"/>
<dbReference type="PaxDb" id="10090-ENSMUSP00000103611"/>
<dbReference type="ProteomicsDB" id="297547"/>
<dbReference type="Antibodypedia" id="71769">
    <property type="antibodies" value="8 antibodies from 4 providers"/>
</dbReference>
<dbReference type="Ensembl" id="ENSMUST00000107977.4">
    <property type="protein sequence ID" value="ENSMUSP00000103611.2"/>
    <property type="gene ID" value="ENSMUSG00000070604.6"/>
</dbReference>
<dbReference type="GeneID" id="75690"/>
<dbReference type="UCSC" id="uc009gmu.2">
    <property type="organism name" value="mouse"/>
</dbReference>
<dbReference type="AGR" id="MGI:1922940"/>
<dbReference type="MGI" id="MGI:1922940">
    <property type="gene designation" value="Vsig10l"/>
</dbReference>
<dbReference type="VEuPathDB" id="HostDB:ENSMUSG00000070604"/>
<dbReference type="eggNOG" id="ENOG502QWIT">
    <property type="taxonomic scope" value="Eukaryota"/>
</dbReference>
<dbReference type="GeneTree" id="ENSGT00940000162314"/>
<dbReference type="HOGENOM" id="CLU_015581_0_0_1"/>
<dbReference type="InParanoid" id="D3YZF7"/>
<dbReference type="OrthoDB" id="6159398at2759"/>
<dbReference type="PhylomeDB" id="D3YZF7"/>
<dbReference type="TreeFam" id="TF334050"/>
<dbReference type="BioGRID-ORCS" id="75690">
    <property type="hits" value="0 hits in 5 CRISPR screens"/>
</dbReference>
<dbReference type="ChiTaRS" id="Vsig10l">
    <property type="organism name" value="mouse"/>
</dbReference>
<dbReference type="PRO" id="PR:D3YZF7"/>
<dbReference type="Proteomes" id="UP000000589">
    <property type="component" value="Chromosome 7"/>
</dbReference>
<dbReference type="RNAct" id="D3YZF7">
    <property type="molecule type" value="protein"/>
</dbReference>
<dbReference type="Bgee" id="ENSMUSG00000070604">
    <property type="expression patterns" value="Expressed in esophagus and 65 other cell types or tissues"/>
</dbReference>
<dbReference type="ExpressionAtlas" id="D3YZF7">
    <property type="expression patterns" value="baseline and differential"/>
</dbReference>
<dbReference type="GO" id="GO:0016020">
    <property type="term" value="C:membrane"/>
    <property type="evidence" value="ECO:0007669"/>
    <property type="project" value="UniProtKB-SubCell"/>
</dbReference>
<dbReference type="GO" id="GO:0005654">
    <property type="term" value="C:nucleoplasm"/>
    <property type="evidence" value="ECO:0007669"/>
    <property type="project" value="Ensembl"/>
</dbReference>
<dbReference type="CDD" id="cd00096">
    <property type="entry name" value="Ig"/>
    <property type="match status" value="1"/>
</dbReference>
<dbReference type="Gene3D" id="2.60.40.10">
    <property type="entry name" value="Immunoglobulins"/>
    <property type="match status" value="4"/>
</dbReference>
<dbReference type="InterPro" id="IPR050831">
    <property type="entry name" value="CEA_cell_adhesion"/>
</dbReference>
<dbReference type="InterPro" id="IPR007110">
    <property type="entry name" value="Ig-like_dom"/>
</dbReference>
<dbReference type="InterPro" id="IPR036179">
    <property type="entry name" value="Ig-like_dom_sf"/>
</dbReference>
<dbReference type="InterPro" id="IPR013783">
    <property type="entry name" value="Ig-like_fold"/>
</dbReference>
<dbReference type="InterPro" id="IPR003599">
    <property type="entry name" value="Ig_sub"/>
</dbReference>
<dbReference type="InterPro" id="IPR003598">
    <property type="entry name" value="Ig_sub2"/>
</dbReference>
<dbReference type="PANTHER" id="PTHR44427">
    <property type="entry name" value="CARCINOEMBRYONIC ANTIGEN-RELATED CELL ADHESION MOLECULE 19"/>
    <property type="match status" value="1"/>
</dbReference>
<dbReference type="PANTHER" id="PTHR44427:SF5">
    <property type="entry name" value="V-SET AND IMMUNOGLOBULIN DOMAIN-CONTAINING PROTEIN 10-LIKE"/>
    <property type="match status" value="1"/>
</dbReference>
<dbReference type="Pfam" id="PF13895">
    <property type="entry name" value="Ig_2"/>
    <property type="match status" value="1"/>
</dbReference>
<dbReference type="SMART" id="SM00409">
    <property type="entry name" value="IG"/>
    <property type="match status" value="3"/>
</dbReference>
<dbReference type="SMART" id="SM00408">
    <property type="entry name" value="IGc2"/>
    <property type="match status" value="2"/>
</dbReference>
<dbReference type="SUPFAM" id="SSF48726">
    <property type="entry name" value="Immunoglobulin"/>
    <property type="match status" value="4"/>
</dbReference>
<dbReference type="PROSITE" id="PS50835">
    <property type="entry name" value="IG_LIKE"/>
    <property type="match status" value="2"/>
</dbReference>
<protein>
    <recommendedName>
        <fullName>V-set and immunoglobulin domain-containing protein 10-like</fullName>
    </recommendedName>
</protein>
<reference key="1">
    <citation type="journal article" date="2009" name="PLoS Biol.">
        <title>Lineage-specific biology revealed by a finished genome assembly of the mouse.</title>
        <authorList>
            <person name="Church D.M."/>
            <person name="Goodstadt L."/>
            <person name="Hillier L.W."/>
            <person name="Zody M.C."/>
            <person name="Goldstein S."/>
            <person name="She X."/>
            <person name="Bult C.J."/>
            <person name="Agarwala R."/>
            <person name="Cherry J.L."/>
            <person name="DiCuccio M."/>
            <person name="Hlavina W."/>
            <person name="Kapustin Y."/>
            <person name="Meric P."/>
            <person name="Maglott D."/>
            <person name="Birtle Z."/>
            <person name="Marques A.C."/>
            <person name="Graves T."/>
            <person name="Zhou S."/>
            <person name="Teague B."/>
            <person name="Potamousis K."/>
            <person name="Churas C."/>
            <person name="Place M."/>
            <person name="Herschleb J."/>
            <person name="Runnheim R."/>
            <person name="Forrest D."/>
            <person name="Amos-Landgraf J."/>
            <person name="Schwartz D.C."/>
            <person name="Cheng Z."/>
            <person name="Lindblad-Toh K."/>
            <person name="Eichler E.E."/>
            <person name="Ponting C.P."/>
        </authorList>
    </citation>
    <scope>NUCLEOTIDE SEQUENCE [LARGE SCALE GENOMIC DNA]</scope>
    <source>
        <strain>C57BL/6J</strain>
    </source>
</reference>
<accession>D3YZF7</accession>
<accession>D3YWE2</accession>
<feature type="signal peptide" evidence="1">
    <location>
        <begin position="1"/>
        <end position="27"/>
    </location>
</feature>
<feature type="chain" id="PRO_0000395118" description="V-set and immunoglobulin domain-containing protein 10-like">
    <location>
        <begin position="28"/>
        <end position="868"/>
    </location>
</feature>
<feature type="topological domain" description="Extracellular" evidence="1">
    <location>
        <begin position="28"/>
        <end position="763"/>
    </location>
</feature>
<feature type="transmembrane region" description="Helical" evidence="1">
    <location>
        <begin position="764"/>
        <end position="784"/>
    </location>
</feature>
<feature type="topological domain" description="Cytoplasmic" evidence="1">
    <location>
        <begin position="785"/>
        <end position="868"/>
    </location>
</feature>
<feature type="domain" description="Ig-like C2-type 1">
    <location>
        <begin position="289"/>
        <end position="381"/>
    </location>
</feature>
<feature type="domain" description="Ig-like C2-type 2">
    <location>
        <begin position="389"/>
        <end position="474"/>
    </location>
</feature>
<feature type="region of interest" description="Disordered" evidence="3">
    <location>
        <begin position="26"/>
        <end position="82"/>
    </location>
</feature>
<feature type="region of interest" description="Disordered" evidence="3">
    <location>
        <begin position="96"/>
        <end position="154"/>
    </location>
</feature>
<feature type="region of interest" description="Disordered" evidence="3">
    <location>
        <begin position="323"/>
        <end position="342"/>
    </location>
</feature>
<feature type="compositionally biased region" description="Low complexity" evidence="3">
    <location>
        <begin position="26"/>
        <end position="52"/>
    </location>
</feature>
<feature type="compositionally biased region" description="Polar residues" evidence="3">
    <location>
        <begin position="71"/>
        <end position="80"/>
    </location>
</feature>
<feature type="compositionally biased region" description="Polar residues" evidence="3">
    <location>
        <begin position="99"/>
        <end position="108"/>
    </location>
</feature>
<feature type="compositionally biased region" description="Polar residues" evidence="3">
    <location>
        <begin position="133"/>
        <end position="143"/>
    </location>
</feature>
<feature type="glycosylation site" description="N-linked (GlcNAc...) asparagine" evidence="1">
    <location>
        <position position="48"/>
    </location>
</feature>
<feature type="glycosylation site" description="N-linked (GlcNAc...) asparagine" evidence="1">
    <location>
        <position position="77"/>
    </location>
</feature>
<feature type="glycosylation site" description="N-linked (GlcNAc...) asparagine" evidence="1">
    <location>
        <position position="88"/>
    </location>
</feature>
<feature type="glycosylation site" description="N-linked (GlcNAc...) asparagine" evidence="1">
    <location>
        <position position="410"/>
    </location>
</feature>
<feature type="glycosylation site" description="N-linked (GlcNAc...) asparagine" evidence="1">
    <location>
        <position position="474"/>
    </location>
</feature>
<feature type="glycosylation site" description="N-linked (GlcNAc...) asparagine" evidence="1">
    <location>
        <position position="628"/>
    </location>
</feature>
<feature type="glycosylation site" description="N-linked (GlcNAc...) asparagine" evidence="1">
    <location>
        <position position="637"/>
    </location>
</feature>
<feature type="disulfide bond" evidence="2">
    <location>
        <begin position="311"/>
        <end position="365"/>
    </location>
</feature>
<feature type="disulfide bond" evidence="2">
    <location>
        <begin position="415"/>
        <end position="458"/>
    </location>
</feature>
<proteinExistence type="inferred from homology"/>